<name>O52E8_HUMAN</name>
<feature type="chain" id="PRO_0000150776" description="Olfactory receptor 52E8">
    <location>
        <begin position="1"/>
        <end position="313"/>
    </location>
</feature>
<feature type="topological domain" description="Extracellular" evidence="3">
    <location>
        <begin position="1"/>
        <end position="30"/>
    </location>
</feature>
<feature type="transmembrane region" description="Helical" evidence="1">
    <location>
        <begin position="31"/>
        <end position="51"/>
    </location>
</feature>
<feature type="topological domain" description="Cytoplasmic" evidence="3">
    <location>
        <begin position="52"/>
        <end position="59"/>
    </location>
</feature>
<feature type="transmembrane region" description="Helical" evidence="1">
    <location>
        <begin position="60"/>
        <end position="80"/>
    </location>
</feature>
<feature type="topological domain" description="Extracellular" evidence="3">
    <location>
        <begin position="81"/>
        <end position="101"/>
    </location>
</feature>
<feature type="transmembrane region" description="Helical" evidence="1">
    <location>
        <begin position="102"/>
        <end position="122"/>
    </location>
</feature>
<feature type="topological domain" description="Cytoplasmic" evidence="3">
    <location>
        <begin position="123"/>
        <end position="144"/>
    </location>
</feature>
<feature type="transmembrane region" description="Helical" evidence="1">
    <location>
        <begin position="145"/>
        <end position="165"/>
    </location>
</feature>
<feature type="topological domain" description="Extracellular" evidence="3">
    <location>
        <begin position="166"/>
        <end position="199"/>
    </location>
</feature>
<feature type="transmembrane region" description="Helical" evidence="1">
    <location>
        <begin position="200"/>
        <end position="220"/>
    </location>
</feature>
<feature type="topological domain" description="Cytoplasmic" evidence="3">
    <location>
        <begin position="221"/>
        <end position="240"/>
    </location>
</feature>
<feature type="transmembrane region" description="Helical" evidence="1">
    <location>
        <begin position="241"/>
        <end position="261"/>
    </location>
</feature>
<feature type="topological domain" description="Extracellular" evidence="3">
    <location>
        <begin position="262"/>
        <end position="274"/>
    </location>
</feature>
<feature type="transmembrane region" description="Helical" evidence="1">
    <location>
        <begin position="275"/>
        <end position="295"/>
    </location>
</feature>
<feature type="topological domain" description="Cytoplasmic" evidence="3">
    <location>
        <begin position="296"/>
        <end position="313"/>
    </location>
</feature>
<feature type="glycosylation site" description="N-linked (GlcNAc...) asparagine" evidence="1">
    <location>
        <position position="5"/>
    </location>
</feature>
<feature type="disulfide bond" evidence="2">
    <location>
        <begin position="99"/>
        <end position="181"/>
    </location>
</feature>
<organism>
    <name type="scientific">Homo sapiens</name>
    <name type="common">Human</name>
    <dbReference type="NCBI Taxonomy" id="9606"/>
    <lineage>
        <taxon>Eukaryota</taxon>
        <taxon>Metazoa</taxon>
        <taxon>Chordata</taxon>
        <taxon>Craniata</taxon>
        <taxon>Vertebrata</taxon>
        <taxon>Euteleostomi</taxon>
        <taxon>Mammalia</taxon>
        <taxon>Eutheria</taxon>
        <taxon>Euarchontoglires</taxon>
        <taxon>Primates</taxon>
        <taxon>Haplorrhini</taxon>
        <taxon>Catarrhini</taxon>
        <taxon>Hominidae</taxon>
        <taxon>Homo</taxon>
    </lineage>
</organism>
<accession>Q6IFG1</accession>
<accession>B9EH38</accession>
<gene>
    <name type="primary">OR52E8</name>
</gene>
<protein>
    <recommendedName>
        <fullName>Olfactory receptor 52E8</fullName>
    </recommendedName>
    <alternativeName>
        <fullName>Olfactory receptor OR11-54</fullName>
    </alternativeName>
</protein>
<proteinExistence type="evidence at transcript level"/>
<sequence length="313" mass="35498">MSTSNHTQFHPSSFLLLGIPGLEDVHIWIGVPFFFVYLVALLGNTALLFVIQTEQSLHEPMYYFLAMLDSIDLGLSTATIPKMLGIFWFNTKEISFGGCLSHMFFIHFFTAMESIVLVAMAFDRYIAICKPLRYTMILTSKIISLIAGIAVLRSLYMVVPLVFLLLRLPFCGHRIIPHTYCEHMGIARLACASIKVNIRFGLGNISLLLLDVILIILSYVRILYAVFCLPSWEARLKALNTCGSHIGVILAFFTPAFFSFLTHRFGHNIPQYIHIILANLYVVVPPALNPVIYGVRTKQIRERVLRIFLKTNH</sequence>
<keyword id="KW-1015">Disulfide bond</keyword>
<keyword id="KW-0297">G-protein coupled receptor</keyword>
<keyword id="KW-0325">Glycoprotein</keyword>
<keyword id="KW-0472">Membrane</keyword>
<keyword id="KW-0552">Olfaction</keyword>
<keyword id="KW-0675">Receptor</keyword>
<keyword id="KW-1185">Reference proteome</keyword>
<keyword id="KW-0716">Sensory transduction</keyword>
<keyword id="KW-0807">Transducer</keyword>
<keyword id="KW-0812">Transmembrane</keyword>
<keyword id="KW-1133">Transmembrane helix</keyword>
<dbReference type="EMBL" id="AC019088">
    <property type="status" value="NOT_ANNOTATED_CDS"/>
    <property type="molecule type" value="Genomic_DNA"/>
</dbReference>
<dbReference type="EMBL" id="BC137030">
    <property type="protein sequence ID" value="AAI37031.1"/>
    <property type="molecule type" value="mRNA"/>
</dbReference>
<dbReference type="EMBL" id="BC137041">
    <property type="protein sequence ID" value="AAI37042.1"/>
    <property type="molecule type" value="mRNA"/>
</dbReference>
<dbReference type="EMBL" id="BK004301">
    <property type="protein sequence ID" value="DAA04699.1"/>
    <property type="molecule type" value="Genomic_DNA"/>
</dbReference>
<dbReference type="CCDS" id="CCDS31400.2"/>
<dbReference type="RefSeq" id="NP_001005168.2">
    <property type="nucleotide sequence ID" value="NM_001005168.3"/>
</dbReference>
<dbReference type="SMR" id="Q6IFG1"/>
<dbReference type="FunCoup" id="Q6IFG1">
    <property type="interactions" value="467"/>
</dbReference>
<dbReference type="STRING" id="9606.ENSP00000444054"/>
<dbReference type="GlyCosmos" id="Q6IFG1">
    <property type="glycosylation" value="1 site, No reported glycans"/>
</dbReference>
<dbReference type="GlyGen" id="Q6IFG1">
    <property type="glycosylation" value="1 site"/>
</dbReference>
<dbReference type="iPTMnet" id="Q6IFG1"/>
<dbReference type="PhosphoSitePlus" id="Q6IFG1"/>
<dbReference type="BioMuta" id="OR52E8"/>
<dbReference type="DMDM" id="239938871"/>
<dbReference type="PaxDb" id="9606-ENSP00000444054"/>
<dbReference type="PeptideAtlas" id="Q6IFG1"/>
<dbReference type="Antibodypedia" id="77126">
    <property type="antibodies" value="9 antibodies from 8 providers"/>
</dbReference>
<dbReference type="DNASU" id="390079"/>
<dbReference type="Ensembl" id="ENST00000537935.2">
    <property type="protein sequence ID" value="ENSP00000444054.2"/>
    <property type="gene ID" value="ENSG00000183269.6"/>
</dbReference>
<dbReference type="GeneID" id="390079"/>
<dbReference type="KEGG" id="hsa:390079"/>
<dbReference type="MANE-Select" id="ENST00000537935.2">
    <property type="protein sequence ID" value="ENSP00000444054.2"/>
    <property type="RefSeq nucleotide sequence ID" value="NM_001005168.3"/>
    <property type="RefSeq protein sequence ID" value="NP_001005168.2"/>
</dbReference>
<dbReference type="UCSC" id="uc010qzr.3">
    <property type="organism name" value="human"/>
</dbReference>
<dbReference type="AGR" id="HGNC:15217"/>
<dbReference type="CTD" id="390079"/>
<dbReference type="GeneCards" id="OR52E8"/>
<dbReference type="HGNC" id="HGNC:15217">
    <property type="gene designation" value="OR52E8"/>
</dbReference>
<dbReference type="HPA" id="ENSG00000183269">
    <property type="expression patterns" value="Not detected"/>
</dbReference>
<dbReference type="neXtProt" id="NX_Q6IFG1"/>
<dbReference type="PharmGKB" id="PA32409"/>
<dbReference type="VEuPathDB" id="HostDB:ENSG00000183269"/>
<dbReference type="eggNOG" id="ENOG502RYU0">
    <property type="taxonomic scope" value="Eukaryota"/>
</dbReference>
<dbReference type="GeneTree" id="ENSGT01090000260056"/>
<dbReference type="HOGENOM" id="CLU_012526_0_0_1"/>
<dbReference type="InParanoid" id="Q6IFG1"/>
<dbReference type="OrthoDB" id="9444602at2759"/>
<dbReference type="PAN-GO" id="Q6IFG1">
    <property type="GO annotations" value="0 GO annotations based on evolutionary models"/>
</dbReference>
<dbReference type="PhylomeDB" id="Q6IFG1"/>
<dbReference type="TreeFam" id="TF343679"/>
<dbReference type="PathwayCommons" id="Q6IFG1"/>
<dbReference type="Reactome" id="R-HSA-9752946">
    <property type="pathway name" value="Expression and translocation of olfactory receptors"/>
</dbReference>
<dbReference type="BioGRID-ORCS" id="390079">
    <property type="hits" value="6 hits in 695 CRISPR screens"/>
</dbReference>
<dbReference type="GeneWiki" id="OR52E8"/>
<dbReference type="GenomeRNAi" id="390079"/>
<dbReference type="Pharos" id="Q6IFG1">
    <property type="development level" value="Tdark"/>
</dbReference>
<dbReference type="PRO" id="PR:Q6IFG1"/>
<dbReference type="Proteomes" id="UP000005640">
    <property type="component" value="Chromosome 11"/>
</dbReference>
<dbReference type="RNAct" id="Q6IFG1">
    <property type="molecule type" value="protein"/>
</dbReference>
<dbReference type="Bgee" id="ENSG00000183269">
    <property type="expression patterns" value="Expressed in male germ line stem cell (sensu Vertebrata) in testis and 1 other cell type or tissue"/>
</dbReference>
<dbReference type="ExpressionAtlas" id="Q6IFG1">
    <property type="expression patterns" value="baseline and differential"/>
</dbReference>
<dbReference type="GO" id="GO:0005886">
    <property type="term" value="C:plasma membrane"/>
    <property type="evidence" value="ECO:0000318"/>
    <property type="project" value="GO_Central"/>
</dbReference>
<dbReference type="GO" id="GO:0004930">
    <property type="term" value="F:G protein-coupled receptor activity"/>
    <property type="evidence" value="ECO:0007669"/>
    <property type="project" value="UniProtKB-KW"/>
</dbReference>
<dbReference type="GO" id="GO:0004984">
    <property type="term" value="F:olfactory receptor activity"/>
    <property type="evidence" value="ECO:0000318"/>
    <property type="project" value="GO_Central"/>
</dbReference>
<dbReference type="CDD" id="cd15952">
    <property type="entry name" value="7tmA_OR52E-like"/>
    <property type="match status" value="1"/>
</dbReference>
<dbReference type="FunFam" id="1.20.1070.10:FF:000006">
    <property type="entry name" value="Olfactory receptor"/>
    <property type="match status" value="1"/>
</dbReference>
<dbReference type="Gene3D" id="1.20.1070.10">
    <property type="entry name" value="Rhodopsin 7-helix transmembrane proteins"/>
    <property type="match status" value="1"/>
</dbReference>
<dbReference type="InterPro" id="IPR000276">
    <property type="entry name" value="GPCR_Rhodpsn"/>
</dbReference>
<dbReference type="InterPro" id="IPR017452">
    <property type="entry name" value="GPCR_Rhodpsn_7TM"/>
</dbReference>
<dbReference type="InterPro" id="IPR000725">
    <property type="entry name" value="Olfact_rcpt"/>
</dbReference>
<dbReference type="InterPro" id="IPR050402">
    <property type="entry name" value="OR51/52/56-like"/>
</dbReference>
<dbReference type="PANTHER" id="PTHR26450:SF170">
    <property type="entry name" value="OLFACTORY RECEPTOR 52E8"/>
    <property type="match status" value="1"/>
</dbReference>
<dbReference type="PANTHER" id="PTHR26450">
    <property type="entry name" value="OLFACTORY RECEPTOR 56B1-RELATED"/>
    <property type="match status" value="1"/>
</dbReference>
<dbReference type="Pfam" id="PF13853">
    <property type="entry name" value="7tm_4"/>
    <property type="match status" value="1"/>
</dbReference>
<dbReference type="PRINTS" id="PR00237">
    <property type="entry name" value="GPCRRHODOPSN"/>
</dbReference>
<dbReference type="PRINTS" id="PR00245">
    <property type="entry name" value="OLFACTORYR"/>
</dbReference>
<dbReference type="SUPFAM" id="SSF81321">
    <property type="entry name" value="Family A G protein-coupled receptor-like"/>
    <property type="match status" value="1"/>
</dbReference>
<dbReference type="PROSITE" id="PS00237">
    <property type="entry name" value="G_PROTEIN_RECEP_F1_1"/>
    <property type="match status" value="1"/>
</dbReference>
<dbReference type="PROSITE" id="PS50262">
    <property type="entry name" value="G_PROTEIN_RECEP_F1_2"/>
    <property type="match status" value="1"/>
</dbReference>
<comment type="function">
    <text evidence="3">Odorant receptor.</text>
</comment>
<comment type="subcellular location">
    <subcellularLocation>
        <location evidence="1">Membrane</location>
        <topology evidence="1">Multi-pass membrane protein</topology>
    </subcellularLocation>
</comment>
<comment type="similarity">
    <text evidence="2">Belongs to the G-protein coupled receptor 1 family.</text>
</comment>
<comment type="online information" name="Human Olfactory Receptor Data Exploratorium (HORDE)">
    <link uri="http://genome.weizmann.ac.il/horde/card/index/symbol:OR52E8"/>
</comment>
<evidence type="ECO:0000255" key="1"/>
<evidence type="ECO:0000255" key="2">
    <source>
        <dbReference type="PROSITE-ProRule" id="PRU00521"/>
    </source>
</evidence>
<evidence type="ECO:0000305" key="3"/>
<reference key="1">
    <citation type="journal article" date="2006" name="Nature">
        <title>Human chromosome 11 DNA sequence and analysis including novel gene identification.</title>
        <authorList>
            <person name="Taylor T.D."/>
            <person name="Noguchi H."/>
            <person name="Totoki Y."/>
            <person name="Toyoda A."/>
            <person name="Kuroki Y."/>
            <person name="Dewar K."/>
            <person name="Lloyd C."/>
            <person name="Itoh T."/>
            <person name="Takeda T."/>
            <person name="Kim D.-W."/>
            <person name="She X."/>
            <person name="Barlow K.F."/>
            <person name="Bloom T."/>
            <person name="Bruford E."/>
            <person name="Chang J.L."/>
            <person name="Cuomo C.A."/>
            <person name="Eichler E."/>
            <person name="FitzGerald M.G."/>
            <person name="Jaffe D.B."/>
            <person name="LaButti K."/>
            <person name="Nicol R."/>
            <person name="Park H.-S."/>
            <person name="Seaman C."/>
            <person name="Sougnez C."/>
            <person name="Yang X."/>
            <person name="Zimmer A.R."/>
            <person name="Zody M.C."/>
            <person name="Birren B.W."/>
            <person name="Nusbaum C."/>
            <person name="Fujiyama A."/>
            <person name="Hattori M."/>
            <person name="Rogers J."/>
            <person name="Lander E.S."/>
            <person name="Sakaki Y."/>
        </authorList>
    </citation>
    <scope>NUCLEOTIDE SEQUENCE [LARGE SCALE GENOMIC DNA]</scope>
</reference>
<reference key="2">
    <citation type="journal article" date="2004" name="Genome Res.">
        <title>The status, quality, and expansion of the NIH full-length cDNA project: the Mammalian Gene Collection (MGC).</title>
        <authorList>
            <consortium name="The MGC Project Team"/>
        </authorList>
    </citation>
    <scope>NUCLEOTIDE SEQUENCE [LARGE SCALE MRNA]</scope>
    <source>
        <tissue>Testis</tissue>
    </source>
</reference>
<reference key="3">
    <citation type="journal article" date="2004" name="Proc. Natl. Acad. Sci. U.S.A.">
        <title>The human olfactory receptor gene family.</title>
        <authorList>
            <person name="Malnic B."/>
            <person name="Godfrey P.A."/>
            <person name="Buck L.B."/>
        </authorList>
    </citation>
    <scope>IDENTIFICATION</scope>
</reference>
<reference key="4">
    <citation type="journal article" date="2004" name="Proc. Natl. Acad. Sci. U.S.A.">
        <authorList>
            <person name="Malnic B."/>
            <person name="Godfrey P.A."/>
            <person name="Buck L.B."/>
        </authorList>
    </citation>
    <scope>ERRATUM OF PUBMED:14983052</scope>
</reference>